<comment type="function">
    <text evidence="6 8 11">Plays a role in microtubule organization and/or maintenance for the formation of primary cilia (PC), a microtubule-based structure that protrudes from the surface of epithelial cells. Plays a critical role in G2/M checkpoint and nuclear divisions. A key player in the DNA damage-activated ATR/ATM signaling cascade since it is required for the proper phosphorylation of H2AX, RPA, CHEK2 and CHEK1. Plays a critical role in chromosome segregation, acting as a mediator required for the maintenance of genomic stability through modulation of MDC1, RPA and CHEK1.</text>
</comment>
<comment type="subunit">
    <text evidence="1 8 9 10 12">Interacts (via N-terminus) with ATRIP. Interacts with ATM, ATR and MDC1. Interacts with XPA (via N-terminus) upon UV irradiation. Interacts with CEP83, CCDC92, TTBK2, DVL3, NPHP3 and weakly with NPHP4. Interacts with DZIP1 (By similarity).</text>
</comment>
<comment type="interaction">
    <interactant intactId="EBI-3937015">
        <id>Q9UPV0</id>
    </interactant>
    <interactant intactId="EBI-719994">
        <id>Q53HC0</id>
        <label>CCDC92</label>
    </interactant>
    <organismsDiffer>false</organismsDiffer>
    <experiments>5</experiments>
</comment>
<comment type="interaction">
    <interactant intactId="EBI-3937015">
        <id>Q9UPV0</id>
    </interactant>
    <interactant intactId="EBI-2559831">
        <id>Q92989</id>
        <label>CLP1</label>
    </interactant>
    <organismsDiffer>false</organismsDiffer>
    <experiments>3</experiments>
</comment>
<comment type="interaction">
    <interactant intactId="EBI-3937015">
        <id>Q9UPV0</id>
    </interactant>
    <interactant intactId="EBI-739789">
        <id>Q92997</id>
        <label>DVL3</label>
    </interactant>
    <organismsDiffer>false</organismsDiffer>
    <experiments>5</experiments>
</comment>
<comment type="interaction">
    <interactant intactId="EBI-3937015">
        <id>Q9UPV0</id>
    </interactant>
    <interactant intactId="EBI-2804263">
        <id>Q7Z494</id>
        <label>NPHP3</label>
    </interactant>
    <organismsDiffer>false</organismsDiffer>
    <experiments>2</experiments>
</comment>
<comment type="interaction">
    <interactant intactId="EBI-3937015">
        <id>Q9UPV0</id>
    </interactant>
    <interactant intactId="EBI-1050303">
        <id>Q6IQ55</id>
        <label>TTBK2</label>
    </interactant>
    <organismsDiffer>false</organismsDiffer>
    <experiments>5</experiments>
</comment>
<comment type="subcellular location">
    <subcellularLocation>
        <location evidence="13">Cytoplasm</location>
        <location evidence="13">Cytoskeleton</location>
        <location evidence="13">Microtubule organizing center</location>
        <location evidence="13">Centrosome</location>
        <location evidence="13">Centriole</location>
    </subcellularLocation>
    <subcellularLocation>
        <location>Nucleus</location>
    </subcellularLocation>
    <text evidence="13">Localizes specifically to very distally located appendage structures on the mature centriole from which initiate PC formation (PubMed:26337392). Persisted at centrioles throughout mitosis. Expressed in chromatin-enriched nuclear fraction of HeLa cells. In response to DNA damage, it translocates to nuclear foci that contain the DNA damage response proteins KAT5/TIP60 and CHEK1.</text>
</comment>
<comment type="alternative products">
    <event type="alternative splicing"/>
    <isoform>
        <id>Q9UPV0-1</id>
        <name>1</name>
        <sequence type="displayed"/>
    </isoform>
    <isoform>
        <id>Q9UPV0-2</id>
        <name>2</name>
        <sequence type="described" ref="VSP_029843 VSP_029844"/>
    </isoform>
</comment>
<comment type="tissue specificity">
    <text evidence="6">Expressed in several cell lines.</text>
</comment>
<comment type="PTM">
    <text evidence="8">Phosphorylation at Ser-186 is induced upon DNA-damage caused by treatment with IR irradiation, UV irradiation, hydroxyurea or amphidicolin. Also MDC1-mediated chromatin remodeling is critical for DNA damage-induced phosphorylation.</text>
</comment>
<comment type="disease" evidence="10">
    <disease id="DI-03538">
        <name>Nephronophthisis 15</name>
        <acronym>NPHP15</acronym>
        <description>An autosomal recessive disorder characterized by the association of nephronophthisis with Leber congenital amaurosis and retinal degeneration, often resulting in blindness during childhood. Additional features include seizures, cerebellar vermis hypoplasia, facial dysmorphism, bronchiectasis and liver failure. Nephronophthisis is a chronic tubulo-interstitial nephritis that progresses to end-stage renal failure.</description>
        <dbReference type="MIM" id="614845"/>
    </disease>
    <text>The disease is caused by variants affecting the gene represented in this entry.</text>
</comment>
<comment type="sequence caution" evidence="16">
    <conflict type="miscellaneous discrepancy">
        <sequence resource="EMBL-CDS" id="AAH00602"/>
    </conflict>
    <text>Contaminating sequence. Potential poly-A sequence.</text>
</comment>
<comment type="sequence caution" evidence="16">
    <conflict type="miscellaneous discrepancy">
        <sequence resource="EMBL-CDS" id="AAH54015"/>
    </conflict>
    <text>Contaminating sequence. Potential poly-A sequence.</text>
</comment>
<comment type="sequence caution" evidence="16">
    <conflict type="erroneous initiation">
        <sequence resource="EMBL-CDS" id="BAA83004"/>
    </conflict>
</comment>
<comment type="sequence caution" evidence="16">
    <conflict type="erroneous initiation">
        <sequence resource="EMBL-CDS" id="BAA91677"/>
    </conflict>
</comment>
<comment type="sequence caution" evidence="16">
    <conflict type="erroneous initiation">
        <sequence resource="EMBL-CDS" id="CAB56023"/>
    </conflict>
</comment>
<feature type="chain" id="PRO_0000312494" description="Centrosomal protein of 164 kDa">
    <location>
        <begin position="1"/>
        <end position="1460"/>
    </location>
</feature>
<feature type="domain" description="WW" evidence="3">
    <location>
        <begin position="56"/>
        <end position="89"/>
    </location>
</feature>
<feature type="region of interest" description="Interaction with ATRIP" evidence="8">
    <location>
        <begin position="1"/>
        <end position="194"/>
    </location>
</feature>
<feature type="region of interest" description="Disordered" evidence="4">
    <location>
        <begin position="107"/>
        <end position="135"/>
    </location>
</feature>
<feature type="region of interest" description="Disordered" evidence="4">
    <location>
        <begin position="213"/>
        <end position="412"/>
    </location>
</feature>
<feature type="region of interest" description="Disordered" evidence="4">
    <location>
        <begin position="440"/>
        <end position="593"/>
    </location>
</feature>
<feature type="region of interest" description="Disordered" evidence="4">
    <location>
        <begin position="658"/>
        <end position="719"/>
    </location>
</feature>
<feature type="region of interest" description="Disordered" evidence="4">
    <location>
        <begin position="1290"/>
        <end position="1310"/>
    </location>
</feature>
<feature type="coiled-coil region" evidence="2">
    <location>
        <begin position="1154"/>
        <end position="1206"/>
    </location>
</feature>
<feature type="compositionally biased region" description="Basic residues" evidence="4">
    <location>
        <begin position="109"/>
        <end position="119"/>
    </location>
</feature>
<feature type="compositionally biased region" description="Acidic residues" evidence="4">
    <location>
        <begin position="217"/>
        <end position="227"/>
    </location>
</feature>
<feature type="compositionally biased region" description="Basic and acidic residues" evidence="4">
    <location>
        <begin position="256"/>
        <end position="270"/>
    </location>
</feature>
<feature type="compositionally biased region" description="Low complexity" evidence="4">
    <location>
        <begin position="285"/>
        <end position="296"/>
    </location>
</feature>
<feature type="compositionally biased region" description="Basic and acidic residues" evidence="4">
    <location>
        <begin position="310"/>
        <end position="323"/>
    </location>
</feature>
<feature type="compositionally biased region" description="Basic and acidic residues" evidence="4">
    <location>
        <begin position="357"/>
        <end position="367"/>
    </location>
</feature>
<feature type="compositionally biased region" description="Low complexity" evidence="4">
    <location>
        <begin position="453"/>
        <end position="464"/>
    </location>
</feature>
<feature type="compositionally biased region" description="Basic and acidic residues" evidence="4">
    <location>
        <begin position="465"/>
        <end position="481"/>
    </location>
</feature>
<feature type="compositionally biased region" description="Low complexity" evidence="4">
    <location>
        <begin position="514"/>
        <end position="525"/>
    </location>
</feature>
<feature type="compositionally biased region" description="Basic and acidic residues" evidence="4">
    <location>
        <begin position="537"/>
        <end position="546"/>
    </location>
</feature>
<feature type="compositionally biased region" description="Basic and acidic residues" evidence="4">
    <location>
        <begin position="658"/>
        <end position="668"/>
    </location>
</feature>
<feature type="compositionally biased region" description="Basic and acidic residues" evidence="4">
    <location>
        <begin position="686"/>
        <end position="719"/>
    </location>
</feature>
<feature type="modified residue" description="Phosphoserine; by ATR and ATM" evidence="8">
    <location>
        <position position="186"/>
    </location>
</feature>
<feature type="modified residue" description="Phosphoserine" evidence="17">
    <location>
        <position position="201"/>
    </location>
</feature>
<feature type="modified residue" description="Phosphoserine" evidence="17">
    <location>
        <position position="566"/>
    </location>
</feature>
<feature type="modified residue" description="Phosphoserine" evidence="17">
    <location>
        <position position="1386"/>
    </location>
</feature>
<feature type="modified residue" description="Phosphoserine" evidence="17">
    <location>
        <position position="1388"/>
    </location>
</feature>
<feature type="modified residue" description="Phosphoserine" evidence="17">
    <location>
        <position position="1443"/>
    </location>
</feature>
<feature type="splice variant" id="VSP_029843" description="In isoform 2." evidence="14 15">
    <original>E</original>
    <variation>ERYH</variation>
    <location>
        <position position="469"/>
    </location>
</feature>
<feature type="splice variant" id="VSP_029844" description="In isoform 2." evidence="14 15">
    <original>REWWRQQRI</original>
    <variation>L</variation>
    <location>
        <begin position="1242"/>
        <end position="1250"/>
    </location>
</feature>
<feature type="sequence variant" id="VAR_068503" description="In NPHP15; dbSNP:rs387907309." evidence="10">
    <original>Q</original>
    <variation>P</variation>
    <location>
        <position position="11"/>
    </location>
</feature>
<feature type="sequence variant" id="VAR_068504" description="In NPHP15; dbSNP:rs387907310." evidence="10">
    <original>R</original>
    <variation>W</variation>
    <location>
        <position position="93"/>
    </location>
</feature>
<feature type="sequence variant" id="VAR_037511" description="In dbSNP:rs490262.">
    <original>S</original>
    <variation>N</variation>
    <location>
        <position position="94"/>
    </location>
</feature>
<feature type="sequence variant" id="VAR_037512" description="In dbSNP:rs2305830." evidence="7">
    <original>T</original>
    <variation>S</variation>
    <location>
        <position position="988"/>
    </location>
</feature>
<feature type="sequence variant" id="VAR_037513" description="In dbSNP:rs573455." evidence="5 7">
    <original>Q</original>
    <variation>R</variation>
    <location>
        <position position="1119"/>
    </location>
</feature>
<feature type="mutagenesis site" description="Prevents phosphorylation." evidence="8">
    <original>S</original>
    <variation>A</variation>
    <location>
        <position position="186"/>
    </location>
</feature>
<feature type="sequence conflict" description="In Ref. 5; AAH54015." evidence="16" ref="5">
    <original>K</original>
    <variation>N</variation>
    <location>
        <position position="110"/>
    </location>
</feature>
<feature type="strand" evidence="21">
    <location>
        <begin position="6"/>
        <end position="8"/>
    </location>
</feature>
<feature type="strand" evidence="20">
    <location>
        <begin position="11"/>
        <end position="13"/>
    </location>
</feature>
<feature type="helix" evidence="19">
    <location>
        <begin position="26"/>
        <end position="35"/>
    </location>
</feature>
<feature type="turn" evidence="19">
    <location>
        <begin position="40"/>
        <end position="42"/>
    </location>
</feature>
<feature type="helix" evidence="19">
    <location>
        <begin position="44"/>
        <end position="46"/>
    </location>
</feature>
<feature type="helix" evidence="19">
    <location>
        <begin position="47"/>
        <end position="54"/>
    </location>
</feature>
<feature type="strand" evidence="19">
    <location>
        <begin position="62"/>
        <end position="66"/>
    </location>
</feature>
<feature type="turn" evidence="18">
    <location>
        <begin position="68"/>
        <end position="70"/>
    </location>
</feature>
<feature type="strand" evidence="19">
    <location>
        <begin position="72"/>
        <end position="76"/>
    </location>
</feature>
<feature type="turn" evidence="19">
    <location>
        <begin position="77"/>
        <end position="79"/>
    </location>
</feature>
<feature type="strand" evidence="19">
    <location>
        <begin position="82"/>
        <end position="85"/>
    </location>
</feature>
<feature type="helix" evidence="19">
    <location>
        <begin position="89"/>
        <end position="103"/>
    </location>
</feature>
<feature type="turn" evidence="18">
    <location>
        <begin position="104"/>
        <end position="106"/>
    </location>
</feature>
<name>CE164_HUMAN</name>
<proteinExistence type="evidence at protein level"/>
<evidence type="ECO:0000250" key="1">
    <source>
        <dbReference type="UniProtKB" id="Q5DU05"/>
    </source>
</evidence>
<evidence type="ECO:0000255" key="2"/>
<evidence type="ECO:0000255" key="3">
    <source>
        <dbReference type="PROSITE-ProRule" id="PRU00224"/>
    </source>
</evidence>
<evidence type="ECO:0000256" key="4">
    <source>
        <dbReference type="SAM" id="MobiDB-lite"/>
    </source>
</evidence>
<evidence type="ECO:0000269" key="5">
    <source>
    </source>
</evidence>
<evidence type="ECO:0000269" key="6">
    <source>
    </source>
</evidence>
<evidence type="ECO:0000269" key="7">
    <source>
    </source>
</evidence>
<evidence type="ECO:0000269" key="8">
    <source>
    </source>
</evidence>
<evidence type="ECO:0000269" key="9">
    <source>
    </source>
</evidence>
<evidence type="ECO:0000269" key="10">
    <source>
    </source>
</evidence>
<evidence type="ECO:0000269" key="11">
    <source>
    </source>
</evidence>
<evidence type="ECO:0000269" key="12">
    <source>
    </source>
</evidence>
<evidence type="ECO:0000269" key="13">
    <source>
    </source>
</evidence>
<evidence type="ECO:0000303" key="14">
    <source>
    </source>
</evidence>
<evidence type="ECO:0000303" key="15">
    <source>
    </source>
</evidence>
<evidence type="ECO:0000305" key="16"/>
<evidence type="ECO:0007744" key="17">
    <source>
    </source>
</evidence>
<evidence type="ECO:0007829" key="18">
    <source>
        <dbReference type="PDB" id="7NWJ"/>
    </source>
</evidence>
<evidence type="ECO:0007829" key="19">
    <source>
        <dbReference type="PDB" id="7O06"/>
    </source>
</evidence>
<evidence type="ECO:0007829" key="20">
    <source>
        <dbReference type="PDB" id="7O0S"/>
    </source>
</evidence>
<evidence type="ECO:0007829" key="21">
    <source>
        <dbReference type="PDB" id="7O3B"/>
    </source>
</evidence>
<gene>
    <name type="primary">CEP164</name>
    <name type="synonym">KIAA1052</name>
    <name type="synonym">NPHP15</name>
</gene>
<accession>Q9UPV0</accession>
<accession>Q6PKH9</accession>
<accession>Q7Z2X9</accession>
<accession>Q9NVS0</accession>
<accession>Q9UFJ6</accession>
<dbReference type="EMBL" id="AB028975">
    <property type="protein sequence ID" value="BAA83004.2"/>
    <property type="status" value="ALT_INIT"/>
    <property type="molecule type" value="mRNA"/>
</dbReference>
<dbReference type="EMBL" id="AP000892">
    <property type="status" value="NOT_ANNOTATED_CDS"/>
    <property type="molecule type" value="Genomic_DNA"/>
</dbReference>
<dbReference type="EMBL" id="AP001822">
    <property type="status" value="NOT_ANNOTATED_CDS"/>
    <property type="molecule type" value="Genomic_DNA"/>
</dbReference>
<dbReference type="EMBL" id="BC000602">
    <property type="protein sequence ID" value="AAH00602.1"/>
    <property type="status" value="ALT_SEQ"/>
    <property type="molecule type" value="mRNA"/>
</dbReference>
<dbReference type="EMBL" id="BC054015">
    <property type="protein sequence ID" value="AAH54015.1"/>
    <property type="status" value="ALT_SEQ"/>
    <property type="molecule type" value="mRNA"/>
</dbReference>
<dbReference type="EMBL" id="AL117632">
    <property type="protein sequence ID" value="CAB56023.1"/>
    <property type="status" value="ALT_INIT"/>
    <property type="molecule type" value="mRNA"/>
</dbReference>
<dbReference type="EMBL" id="AK001412">
    <property type="protein sequence ID" value="BAA91677.1"/>
    <property type="status" value="ALT_INIT"/>
    <property type="molecule type" value="mRNA"/>
</dbReference>
<dbReference type="CCDS" id="CCDS31683.1">
    <molecule id="Q9UPV0-1"/>
</dbReference>
<dbReference type="PIR" id="T17333">
    <property type="entry name" value="T17333"/>
</dbReference>
<dbReference type="RefSeq" id="NP_001258862.1">
    <molecule id="Q9UPV0-2"/>
    <property type="nucleotide sequence ID" value="NM_001271933.2"/>
</dbReference>
<dbReference type="RefSeq" id="NP_055771.4">
    <molecule id="Q9UPV0-1"/>
    <property type="nucleotide sequence ID" value="NM_014956.4"/>
</dbReference>
<dbReference type="RefSeq" id="XP_005271513.1">
    <molecule id="Q9UPV0-1"/>
    <property type="nucleotide sequence ID" value="XM_005271456.2"/>
</dbReference>
<dbReference type="RefSeq" id="XP_005271514.1">
    <molecule id="Q9UPV0-2"/>
    <property type="nucleotide sequence ID" value="XM_005271457.2"/>
</dbReference>
<dbReference type="RefSeq" id="XP_047282542.1">
    <molecule id="Q9UPV0-1"/>
    <property type="nucleotide sequence ID" value="XM_047426586.1"/>
</dbReference>
<dbReference type="RefSeq" id="XP_054224052.1">
    <molecule id="Q9UPV0-1"/>
    <property type="nucleotide sequence ID" value="XM_054368077.1"/>
</dbReference>
<dbReference type="RefSeq" id="XP_054224053.1">
    <molecule id="Q9UPV0-1"/>
    <property type="nucleotide sequence ID" value="XM_054368078.1"/>
</dbReference>
<dbReference type="RefSeq" id="XP_054224054.1">
    <molecule id="Q9UPV0-2"/>
    <property type="nucleotide sequence ID" value="XM_054368079.1"/>
</dbReference>
<dbReference type="PDB" id="7NWJ">
    <property type="method" value="NMR"/>
    <property type="chains" value="A=1-109"/>
</dbReference>
<dbReference type="PDB" id="7O06">
    <property type="method" value="X-ray"/>
    <property type="resolution" value="1.60 A"/>
    <property type="chains" value="C/D=1-109"/>
</dbReference>
<dbReference type="PDB" id="7O0S">
    <property type="method" value="X-ray"/>
    <property type="resolution" value="1.70 A"/>
    <property type="chains" value="B=1-109"/>
</dbReference>
<dbReference type="PDB" id="7O3B">
    <property type="method" value="X-ray"/>
    <property type="resolution" value="2.40 A"/>
    <property type="chains" value="G/H/I=1-109"/>
</dbReference>
<dbReference type="PDBsum" id="7NWJ"/>
<dbReference type="PDBsum" id="7O06"/>
<dbReference type="PDBsum" id="7O0S"/>
<dbReference type="PDBsum" id="7O3B"/>
<dbReference type="SMR" id="Q9UPV0"/>
<dbReference type="BioGRID" id="116561">
    <property type="interactions" value="133"/>
</dbReference>
<dbReference type="CORUM" id="Q9UPV0"/>
<dbReference type="FunCoup" id="Q9UPV0">
    <property type="interactions" value="1299"/>
</dbReference>
<dbReference type="IntAct" id="Q9UPV0">
    <property type="interactions" value="113"/>
</dbReference>
<dbReference type="STRING" id="9606.ENSP00000278935"/>
<dbReference type="CarbonylDB" id="Q9UPV0"/>
<dbReference type="GlyGen" id="Q9UPV0">
    <property type="glycosylation" value="3 sites, 1 O-linked glycan (1 site)"/>
</dbReference>
<dbReference type="iPTMnet" id="Q9UPV0"/>
<dbReference type="PhosphoSitePlus" id="Q9UPV0"/>
<dbReference type="SwissPalm" id="Q9UPV0"/>
<dbReference type="BioMuta" id="CEP164"/>
<dbReference type="DMDM" id="162416241"/>
<dbReference type="jPOST" id="Q9UPV0"/>
<dbReference type="MassIVE" id="Q9UPV0"/>
<dbReference type="PaxDb" id="9606-ENSP00000278935"/>
<dbReference type="PeptideAtlas" id="Q9UPV0"/>
<dbReference type="ProteomicsDB" id="85453">
    <molecule id="Q9UPV0-1"/>
</dbReference>
<dbReference type="ProteomicsDB" id="85454">
    <molecule id="Q9UPV0-2"/>
</dbReference>
<dbReference type="Pumba" id="Q9UPV0"/>
<dbReference type="Antibodypedia" id="32367">
    <property type="antibodies" value="210 antibodies from 30 providers"/>
</dbReference>
<dbReference type="DNASU" id="22897"/>
<dbReference type="Ensembl" id="ENST00000278935.8">
    <molecule id="Q9UPV0-1"/>
    <property type="protein sequence ID" value="ENSP00000278935.3"/>
    <property type="gene ID" value="ENSG00000110274.16"/>
</dbReference>
<dbReference type="GeneID" id="22897"/>
<dbReference type="KEGG" id="hsa:22897"/>
<dbReference type="MANE-Select" id="ENST00000278935.8">
    <property type="protein sequence ID" value="ENSP00000278935.3"/>
    <property type="RefSeq nucleotide sequence ID" value="NM_014956.5"/>
    <property type="RefSeq protein sequence ID" value="NP_055771.4"/>
</dbReference>
<dbReference type="UCSC" id="uc001prc.4">
    <molecule id="Q9UPV0-1"/>
    <property type="organism name" value="human"/>
</dbReference>
<dbReference type="AGR" id="HGNC:29182"/>
<dbReference type="CTD" id="22897"/>
<dbReference type="DisGeNET" id="22897"/>
<dbReference type="GeneCards" id="CEP164"/>
<dbReference type="GeneReviews" id="CEP164"/>
<dbReference type="HGNC" id="HGNC:29182">
    <property type="gene designation" value="CEP164"/>
</dbReference>
<dbReference type="HPA" id="ENSG00000110274">
    <property type="expression patterns" value="Low tissue specificity"/>
</dbReference>
<dbReference type="MalaCards" id="CEP164"/>
<dbReference type="MIM" id="614845">
    <property type="type" value="phenotype"/>
</dbReference>
<dbReference type="MIM" id="614848">
    <property type="type" value="gene"/>
</dbReference>
<dbReference type="neXtProt" id="NX_Q9UPV0"/>
<dbReference type="OpenTargets" id="ENSG00000110274"/>
<dbReference type="Orphanet" id="3156">
    <property type="disease" value="Senior-Loken syndrome"/>
</dbReference>
<dbReference type="PharmGKB" id="PA142672127"/>
<dbReference type="VEuPathDB" id="HostDB:ENSG00000110274"/>
<dbReference type="eggNOG" id="ENOG502QR4A">
    <property type="taxonomic scope" value="Eukaryota"/>
</dbReference>
<dbReference type="GeneTree" id="ENSGT00950000183078"/>
<dbReference type="HOGENOM" id="CLU_002153_0_0_1"/>
<dbReference type="InParanoid" id="Q9UPV0"/>
<dbReference type="OMA" id="EEHWQAM"/>
<dbReference type="OrthoDB" id="6344460at2759"/>
<dbReference type="PAN-GO" id="Q9UPV0">
    <property type="GO annotations" value="4 GO annotations based on evolutionary models"/>
</dbReference>
<dbReference type="PhylomeDB" id="Q9UPV0"/>
<dbReference type="TreeFam" id="TF333034"/>
<dbReference type="PathwayCommons" id="Q9UPV0"/>
<dbReference type="Reactome" id="R-HSA-2565942">
    <property type="pathway name" value="Regulation of PLK1 Activity at G2/M Transition"/>
</dbReference>
<dbReference type="Reactome" id="R-HSA-380259">
    <property type="pathway name" value="Loss of Nlp from mitotic centrosomes"/>
</dbReference>
<dbReference type="Reactome" id="R-HSA-380270">
    <property type="pathway name" value="Recruitment of mitotic centrosome proteins and complexes"/>
</dbReference>
<dbReference type="Reactome" id="R-HSA-380284">
    <property type="pathway name" value="Loss of proteins required for interphase microtubule organization from the centrosome"/>
</dbReference>
<dbReference type="Reactome" id="R-HSA-380320">
    <property type="pathway name" value="Recruitment of NuMA to mitotic centrosomes"/>
</dbReference>
<dbReference type="Reactome" id="R-HSA-5620912">
    <property type="pathway name" value="Anchoring of the basal body to the plasma membrane"/>
</dbReference>
<dbReference type="Reactome" id="R-HSA-8854518">
    <property type="pathway name" value="AURKA Activation by TPX2"/>
</dbReference>
<dbReference type="SignaLink" id="Q9UPV0"/>
<dbReference type="BioGRID-ORCS" id="22897">
    <property type="hits" value="18 hits in 1156 CRISPR screens"/>
</dbReference>
<dbReference type="CD-CODE" id="8C2F96ED">
    <property type="entry name" value="Centrosome"/>
</dbReference>
<dbReference type="ChiTaRS" id="CEP164">
    <property type="organism name" value="human"/>
</dbReference>
<dbReference type="GeneWiki" id="CEP164"/>
<dbReference type="GenomeRNAi" id="22897"/>
<dbReference type="Pharos" id="Q9UPV0">
    <property type="development level" value="Tbio"/>
</dbReference>
<dbReference type="PRO" id="PR:Q9UPV0"/>
<dbReference type="Proteomes" id="UP000005640">
    <property type="component" value="Chromosome 11"/>
</dbReference>
<dbReference type="RNAct" id="Q9UPV0">
    <property type="molecule type" value="protein"/>
</dbReference>
<dbReference type="Bgee" id="ENSG00000110274">
    <property type="expression patterns" value="Expressed in sperm and 174 other cell types or tissues"/>
</dbReference>
<dbReference type="ExpressionAtlas" id="Q9UPV0">
    <property type="expression patterns" value="baseline and differential"/>
</dbReference>
<dbReference type="GO" id="GO:0005814">
    <property type="term" value="C:centriole"/>
    <property type="evidence" value="ECO:0000314"/>
    <property type="project" value="UniProtKB"/>
</dbReference>
<dbReference type="GO" id="GO:0005813">
    <property type="term" value="C:centrosome"/>
    <property type="evidence" value="ECO:0000314"/>
    <property type="project" value="HPA"/>
</dbReference>
<dbReference type="GO" id="GO:0097539">
    <property type="term" value="C:ciliary transition fiber"/>
    <property type="evidence" value="ECO:0000314"/>
    <property type="project" value="MGI"/>
</dbReference>
<dbReference type="GO" id="GO:0005829">
    <property type="term" value="C:cytosol"/>
    <property type="evidence" value="ECO:0000314"/>
    <property type="project" value="HPA"/>
</dbReference>
<dbReference type="GO" id="GO:0005615">
    <property type="term" value="C:extracellular space"/>
    <property type="evidence" value="ECO:0007005"/>
    <property type="project" value="UniProtKB"/>
</dbReference>
<dbReference type="GO" id="GO:0043231">
    <property type="term" value="C:intracellular membrane-bounded organelle"/>
    <property type="evidence" value="ECO:0000314"/>
    <property type="project" value="HPA"/>
</dbReference>
<dbReference type="GO" id="GO:0005654">
    <property type="term" value="C:nucleoplasm"/>
    <property type="evidence" value="ECO:0000314"/>
    <property type="project" value="HPA"/>
</dbReference>
<dbReference type="GO" id="GO:0051301">
    <property type="term" value="P:cell division"/>
    <property type="evidence" value="ECO:0007669"/>
    <property type="project" value="UniProtKB-KW"/>
</dbReference>
<dbReference type="GO" id="GO:0060271">
    <property type="term" value="P:cilium assembly"/>
    <property type="evidence" value="ECO:0000315"/>
    <property type="project" value="UniProtKB"/>
</dbReference>
<dbReference type="GO" id="GO:0006281">
    <property type="term" value="P:DNA repair"/>
    <property type="evidence" value="ECO:0007669"/>
    <property type="project" value="UniProtKB-KW"/>
</dbReference>
<dbReference type="CDD" id="cd00201">
    <property type="entry name" value="WW"/>
    <property type="match status" value="1"/>
</dbReference>
<dbReference type="FunFam" id="3.30.1470.10:FF:000001">
    <property type="entry name" value="Centrosomal protein of 164 kDa"/>
    <property type="match status" value="1"/>
</dbReference>
<dbReference type="Gene3D" id="3.30.1470.10">
    <property type="entry name" value="Photosystem I PsaD, reaction center subunit II"/>
    <property type="match status" value="1"/>
</dbReference>
<dbReference type="InterPro" id="IPR051841">
    <property type="entry name" value="MT-Golgi_org_protein"/>
</dbReference>
<dbReference type="InterPro" id="IPR001202">
    <property type="entry name" value="WW_dom"/>
</dbReference>
<dbReference type="InterPro" id="IPR036020">
    <property type="entry name" value="WW_dom_sf"/>
</dbReference>
<dbReference type="PANTHER" id="PTHR18902:SF27">
    <property type="entry name" value="CENTROSOMAL PROTEIN OF 164 KDA"/>
    <property type="match status" value="1"/>
</dbReference>
<dbReference type="PANTHER" id="PTHR18902">
    <property type="entry name" value="NUCLEAR MITOTIC APPARATUS PROTEIN 1-RELATED"/>
    <property type="match status" value="1"/>
</dbReference>
<dbReference type="SMART" id="SM00456">
    <property type="entry name" value="WW"/>
    <property type="match status" value="1"/>
</dbReference>
<dbReference type="SUPFAM" id="SSF51045">
    <property type="entry name" value="WW domain"/>
    <property type="match status" value="1"/>
</dbReference>
<dbReference type="PROSITE" id="PS50020">
    <property type="entry name" value="WW_DOMAIN_2"/>
    <property type="match status" value="1"/>
</dbReference>
<reference key="1">
    <citation type="journal article" date="2007" name="J. Cell Biol.">
        <title>Cep164, a novel centriole appendage protein required for primary cilium formation.</title>
        <authorList>
            <person name="Graser S."/>
            <person name="Stierhof Y.-D."/>
            <person name="Lavoie S.B."/>
            <person name="Gassner O.S."/>
            <person name="Lamla S."/>
            <person name="Le Clech M."/>
            <person name="Nigg E.A."/>
        </authorList>
    </citation>
    <scope>NUCLEOTIDE SEQUENCE [MRNA] (ISOFORM 1)</scope>
    <scope>FUNCTION</scope>
    <scope>SUBCELLULAR LOCATION</scope>
    <scope>TISSUE SPECIFICITY</scope>
</reference>
<reference key="2">
    <citation type="journal article" date="2008" name="Genes Dev.">
        <title>Cep164 is a mediator protein required for the maintenance of genomic stability through modulation of MDC1, RPA, and CHK1.</title>
        <authorList>
            <person name="Sivasubramaniam S."/>
            <person name="Sun X."/>
            <person name="Pan Y.R."/>
            <person name="Wang S."/>
            <person name="Lee E.Y."/>
        </authorList>
    </citation>
    <scope>NUCLEOTIDE SEQUENCE [MRNA] (ISOFORM 2)</scope>
    <scope>FUNCTION</scope>
    <scope>INTERACTION WITH ATM; ATR; ATRIP AND MDC1</scope>
    <scope>SUBCELLULAR LOCATION</scope>
    <scope>PHOSPHORYLATION AT SER-186</scope>
    <scope>MUTAGENESIS OF SER-186</scope>
</reference>
<reference key="3">
    <citation type="journal article" date="1999" name="DNA Res.">
        <title>Prediction of the coding sequences of unidentified human genes. XIV. The complete sequences of 100 new cDNA clones from brain which code for large proteins in vitro.</title>
        <authorList>
            <person name="Kikuno R."/>
            <person name="Nagase T."/>
            <person name="Ishikawa K."/>
            <person name="Hirosawa M."/>
            <person name="Miyajima N."/>
            <person name="Tanaka A."/>
            <person name="Kotani H."/>
            <person name="Nomura N."/>
            <person name="Ohara O."/>
        </authorList>
    </citation>
    <scope>NUCLEOTIDE SEQUENCE [LARGE SCALE MRNA] (ISOFORM 2)</scope>
    <source>
        <tissue>Brain</tissue>
    </source>
</reference>
<reference key="4">
    <citation type="journal article" date="2006" name="Nature">
        <title>Human chromosome 11 DNA sequence and analysis including novel gene identification.</title>
        <authorList>
            <person name="Taylor T.D."/>
            <person name="Noguchi H."/>
            <person name="Totoki Y."/>
            <person name="Toyoda A."/>
            <person name="Kuroki Y."/>
            <person name="Dewar K."/>
            <person name="Lloyd C."/>
            <person name="Itoh T."/>
            <person name="Takeda T."/>
            <person name="Kim D.-W."/>
            <person name="She X."/>
            <person name="Barlow K.F."/>
            <person name="Bloom T."/>
            <person name="Bruford E."/>
            <person name="Chang J.L."/>
            <person name="Cuomo C.A."/>
            <person name="Eichler E."/>
            <person name="FitzGerald M.G."/>
            <person name="Jaffe D.B."/>
            <person name="LaButti K."/>
            <person name="Nicol R."/>
            <person name="Park H.-S."/>
            <person name="Seaman C."/>
            <person name="Sougnez C."/>
            <person name="Yang X."/>
            <person name="Zimmer A.R."/>
            <person name="Zody M.C."/>
            <person name="Birren B.W."/>
            <person name="Nusbaum C."/>
            <person name="Fujiyama A."/>
            <person name="Hattori M."/>
            <person name="Rogers J."/>
            <person name="Lander E.S."/>
            <person name="Sakaki Y."/>
        </authorList>
    </citation>
    <scope>NUCLEOTIDE SEQUENCE [LARGE SCALE GENOMIC DNA]</scope>
</reference>
<reference key="5">
    <citation type="journal article" date="2004" name="Genome Res.">
        <title>The status, quality, and expansion of the NIH full-length cDNA project: the Mammalian Gene Collection (MGC).</title>
        <authorList>
            <consortium name="The MGC Project Team"/>
        </authorList>
    </citation>
    <scope>NUCLEOTIDE SEQUENCE [LARGE SCALE MRNA] OF 1-116 (ISOFORMS 1/2)</scope>
    <source>
        <tissue>Skin</tissue>
    </source>
</reference>
<reference key="6">
    <citation type="journal article" date="2007" name="BMC Genomics">
        <title>The full-ORF clone resource of the German cDNA consortium.</title>
        <authorList>
            <person name="Bechtel S."/>
            <person name="Rosenfelder H."/>
            <person name="Duda A."/>
            <person name="Schmidt C.P."/>
            <person name="Ernst U."/>
            <person name="Wellenreuther R."/>
            <person name="Mehrle A."/>
            <person name="Schuster C."/>
            <person name="Bahr A."/>
            <person name="Bloecker H."/>
            <person name="Heubner D."/>
            <person name="Hoerlein A."/>
            <person name="Michel G."/>
            <person name="Wedler H."/>
            <person name="Koehrer K."/>
            <person name="Ottenwaelder B."/>
            <person name="Poustka A."/>
            <person name="Wiemann S."/>
            <person name="Schupp I."/>
        </authorList>
    </citation>
    <scope>NUCLEOTIDE SEQUENCE [LARGE SCALE MRNA] OF 868-1460 (ISOFORM 1)</scope>
    <scope>VARIANTS SER-988 AND ARG-1119</scope>
    <source>
        <tissue>Testis</tissue>
    </source>
</reference>
<reference key="7">
    <citation type="journal article" date="2004" name="Nat. Genet.">
        <title>Complete sequencing and characterization of 21,243 full-length human cDNAs.</title>
        <authorList>
            <person name="Ota T."/>
            <person name="Suzuki Y."/>
            <person name="Nishikawa T."/>
            <person name="Otsuki T."/>
            <person name="Sugiyama T."/>
            <person name="Irie R."/>
            <person name="Wakamatsu A."/>
            <person name="Hayashi K."/>
            <person name="Sato H."/>
            <person name="Nagai K."/>
            <person name="Kimura K."/>
            <person name="Makita H."/>
            <person name="Sekine M."/>
            <person name="Obayashi M."/>
            <person name="Nishi T."/>
            <person name="Shibahara T."/>
            <person name="Tanaka T."/>
            <person name="Ishii S."/>
            <person name="Yamamoto J."/>
            <person name="Saito K."/>
            <person name="Kawai Y."/>
            <person name="Isono Y."/>
            <person name="Nakamura Y."/>
            <person name="Nagahari K."/>
            <person name="Murakami K."/>
            <person name="Yasuda T."/>
            <person name="Iwayanagi T."/>
            <person name="Wagatsuma M."/>
            <person name="Shiratori A."/>
            <person name="Sudo H."/>
            <person name="Hosoiri T."/>
            <person name="Kaku Y."/>
            <person name="Kodaira H."/>
            <person name="Kondo H."/>
            <person name="Sugawara M."/>
            <person name="Takahashi M."/>
            <person name="Kanda K."/>
            <person name="Yokoi T."/>
            <person name="Furuya T."/>
            <person name="Kikkawa E."/>
            <person name="Omura Y."/>
            <person name="Abe K."/>
            <person name="Kamihara K."/>
            <person name="Katsuta N."/>
            <person name="Sato K."/>
            <person name="Tanikawa M."/>
            <person name="Yamazaki M."/>
            <person name="Ninomiya K."/>
            <person name="Ishibashi T."/>
            <person name="Yamashita H."/>
            <person name="Murakawa K."/>
            <person name="Fujimori K."/>
            <person name="Tanai H."/>
            <person name="Kimata M."/>
            <person name="Watanabe M."/>
            <person name="Hiraoka S."/>
            <person name="Chiba Y."/>
            <person name="Ishida S."/>
            <person name="Ono Y."/>
            <person name="Takiguchi S."/>
            <person name="Watanabe S."/>
            <person name="Yosida M."/>
            <person name="Hotuta T."/>
            <person name="Kusano J."/>
            <person name="Kanehori K."/>
            <person name="Takahashi-Fujii A."/>
            <person name="Hara H."/>
            <person name="Tanase T.-O."/>
            <person name="Nomura Y."/>
            <person name="Togiya S."/>
            <person name="Komai F."/>
            <person name="Hara R."/>
            <person name="Takeuchi K."/>
            <person name="Arita M."/>
            <person name="Imose N."/>
            <person name="Musashino K."/>
            <person name="Yuuki H."/>
            <person name="Oshima A."/>
            <person name="Sasaki N."/>
            <person name="Aotsuka S."/>
            <person name="Yoshikawa Y."/>
            <person name="Matsunawa H."/>
            <person name="Ichihara T."/>
            <person name="Shiohata N."/>
            <person name="Sano S."/>
            <person name="Moriya S."/>
            <person name="Momiyama H."/>
            <person name="Satoh N."/>
            <person name="Takami S."/>
            <person name="Terashima Y."/>
            <person name="Suzuki O."/>
            <person name="Nakagawa S."/>
            <person name="Senoh A."/>
            <person name="Mizoguchi H."/>
            <person name="Goto Y."/>
            <person name="Shimizu F."/>
            <person name="Wakebe H."/>
            <person name="Hishigaki H."/>
            <person name="Watanabe T."/>
            <person name="Sugiyama A."/>
            <person name="Takemoto M."/>
            <person name="Kawakami B."/>
            <person name="Yamazaki M."/>
            <person name="Watanabe K."/>
            <person name="Kumagai A."/>
            <person name="Itakura S."/>
            <person name="Fukuzumi Y."/>
            <person name="Fujimori Y."/>
            <person name="Komiyama M."/>
            <person name="Tashiro H."/>
            <person name="Tanigami A."/>
            <person name="Fujiwara T."/>
            <person name="Ono T."/>
            <person name="Yamada K."/>
            <person name="Fujii Y."/>
            <person name="Ozaki K."/>
            <person name="Hirao M."/>
            <person name="Ohmori Y."/>
            <person name="Kawabata A."/>
            <person name="Hikiji T."/>
            <person name="Kobatake N."/>
            <person name="Inagaki H."/>
            <person name="Ikema Y."/>
            <person name="Okamoto S."/>
            <person name="Okitani R."/>
            <person name="Kawakami T."/>
            <person name="Noguchi S."/>
            <person name="Itoh T."/>
            <person name="Shigeta K."/>
            <person name="Senba T."/>
            <person name="Matsumura K."/>
            <person name="Nakajima Y."/>
            <person name="Mizuno T."/>
            <person name="Morinaga M."/>
            <person name="Sasaki M."/>
            <person name="Togashi T."/>
            <person name="Oyama M."/>
            <person name="Hata H."/>
            <person name="Watanabe M."/>
            <person name="Komatsu T."/>
            <person name="Mizushima-Sugano J."/>
            <person name="Satoh T."/>
            <person name="Shirai Y."/>
            <person name="Takahashi Y."/>
            <person name="Nakagawa K."/>
            <person name="Okumura K."/>
            <person name="Nagase T."/>
            <person name="Nomura N."/>
            <person name="Kikuchi H."/>
            <person name="Masuho Y."/>
            <person name="Yamashita R."/>
            <person name="Nakai K."/>
            <person name="Yada T."/>
            <person name="Nakamura Y."/>
            <person name="Ohara O."/>
            <person name="Isogai T."/>
            <person name="Sugano S."/>
        </authorList>
    </citation>
    <scope>NUCLEOTIDE SEQUENCE [LARGE SCALE MRNA] OF 1038-1460 (ISOFORM 1)</scope>
    <scope>VARIANT ARG-1119</scope>
    <source>
        <tissue>Testis</tissue>
    </source>
</reference>
<reference key="8">
    <citation type="journal article" date="2009" name="Cell Cycle">
        <title>UV-dependent interaction between Cep164 and XPA mediates localization of Cep164 at sites of DNA damage and UV sensitivity.</title>
        <authorList>
            <person name="Pan Y.R."/>
            <person name="Lee E.Y."/>
        </authorList>
    </citation>
    <scope>INTERACTION WITH XPA</scope>
    <scope>SUBCELLULAR LOCATION</scope>
</reference>
<reference key="9">
    <citation type="journal article" date="2011" name="Cytoskeleton">
        <title>Assessing the localization of centrosomal proteins by PALM/STORM nanoscopy.</title>
        <authorList>
            <person name="Sillibourne J.E."/>
            <person name="Specht C.G."/>
            <person name="Izeddin I."/>
            <person name="Hurbain I."/>
            <person name="Tran P."/>
            <person name="Triller A."/>
            <person name="Darzacq X."/>
            <person name="Dahan M."/>
            <person name="Bornens M."/>
        </authorList>
    </citation>
    <scope>SUBCELLULAR LOCATION</scope>
</reference>
<reference key="10">
    <citation type="journal article" date="2012" name="Cell">
        <title>Exome capture reveals ZNF423 and CEP164 mutations, linking renal ciliopathies to DNA damage response signaling.</title>
        <authorList>
            <person name="Chaki M."/>
            <person name="Airik R."/>
            <person name="Ghosh A.K."/>
            <person name="Giles R.H."/>
            <person name="Chen R."/>
            <person name="Slaats G.G."/>
            <person name="Wang H."/>
            <person name="Hurd T.W."/>
            <person name="Zhou W."/>
            <person name="Cluckey A."/>
            <person name="Gee H.Y."/>
            <person name="Ramaswami G."/>
            <person name="Hong C.J."/>
            <person name="Hamilton B.A."/>
            <person name="Cervenka I."/>
            <person name="Ganji R.S."/>
            <person name="Bryja V."/>
            <person name="Arts H.H."/>
            <person name="van Reeuwijk J."/>
            <person name="Oud M.M."/>
            <person name="Letteboer S.J."/>
            <person name="Roepman R."/>
            <person name="Husson H."/>
            <person name="Ibraghimov-Beskrovnaya O."/>
            <person name="Yasunaga T."/>
            <person name="Walz G."/>
            <person name="Eley L."/>
            <person name="Sayer J.A."/>
            <person name="Schermer B."/>
            <person name="Liebau M.C."/>
            <person name="Benzing T."/>
            <person name="Le Corre S."/>
            <person name="Drummond I."/>
            <person name="Janssen S."/>
            <person name="Allen S.J."/>
            <person name="Natarajan S."/>
            <person name="O'Toole J.F."/>
            <person name="Attanasio M."/>
            <person name="Saunier S."/>
            <person name="Antignac C."/>
            <person name="Koenekoop R.K."/>
            <person name="Ren H."/>
            <person name="Lopez I."/>
            <person name="Nayir A."/>
            <person name="Stoetzel C."/>
            <person name="Dollfus H."/>
            <person name="Massoudi R."/>
            <person name="Gleeson J.G."/>
            <person name="Andreoli S.P."/>
            <person name="Doherty D.G."/>
            <person name="Lindstrad A."/>
            <person name="Golzio C."/>
            <person name="Katsanis N."/>
            <person name="Pape L."/>
            <person name="Abboud E.B."/>
            <person name="Al-Rajhi A.A."/>
            <person name="Lewis R.A."/>
            <person name="Omran H."/>
            <person name="Lee E.Y."/>
            <person name="Wang S."/>
            <person name="Sekiguchi J.M."/>
            <person name="Saunders R."/>
            <person name="Johnson C.A."/>
            <person name="Garner E."/>
            <person name="Vanselow K."/>
            <person name="Andersen J.S."/>
            <person name="Shlomai J."/>
            <person name="Nurnberg G."/>
            <person name="Nurnberg P."/>
            <person name="Levy S."/>
            <person name="Smogorzewska A."/>
            <person name="Otto E.A."/>
            <person name="Hildebrandt F."/>
        </authorList>
    </citation>
    <scope>SUBCELLULAR LOCATION</scope>
    <scope>INTERACTION WITH CCDC92; TTBK2; NPHP3; NPHP4 AND DVL3</scope>
    <scope>VARIANTS NPHP15 PRO-11 AND TRP-93</scope>
</reference>
<reference key="11">
    <citation type="journal article" date="2013" name="Genes Dev.">
        <title>Centriole distal appendages promote membrane docking, leading to cilia initiation.</title>
        <authorList>
            <person name="Tanos B.E."/>
            <person name="Yang H.J."/>
            <person name="Soni R."/>
            <person name="Wang W.J."/>
            <person name="Macaluso F.P."/>
            <person name="Asara J.M."/>
            <person name="Tsou M.F."/>
        </authorList>
    </citation>
    <scope>FUNCTION</scope>
    <scope>SUBCELLULAR LOCATION</scope>
</reference>
<reference key="12">
    <citation type="journal article" date="2013" name="J. Proteome Res.">
        <title>Toward a comprehensive characterization of a human cancer cell phosphoproteome.</title>
        <authorList>
            <person name="Zhou H."/>
            <person name="Di Palma S."/>
            <person name="Preisinger C."/>
            <person name="Peng M."/>
            <person name="Polat A.N."/>
            <person name="Heck A.J."/>
            <person name="Mohammed S."/>
        </authorList>
    </citation>
    <scope>PHOSPHORYLATION [LARGE SCALE ANALYSIS] AT SER-201; SER-566; SER-1386; SER-1388 AND SER-1443</scope>
    <scope>IDENTIFICATION BY MASS SPECTROMETRY [LARGE SCALE ANALYSIS]</scope>
    <source>
        <tissue>Cervix carcinoma</tissue>
        <tissue>Erythroleukemia</tissue>
    </source>
</reference>
<reference key="13">
    <citation type="journal article" date="2013" name="Proc. Natl. Acad. Sci. U.S.A.">
        <title>CCDC41 is required for ciliary vesicle docking to the mother centriole.</title>
        <authorList>
            <person name="Joo K."/>
            <person name="Kim C.G."/>
            <person name="Lee M.S."/>
            <person name="Moon H.Y."/>
            <person name="Lee S.H."/>
            <person name="Kim M.J."/>
            <person name="Kweon H.S."/>
            <person name="Park W.Y."/>
            <person name="Kim C.H."/>
            <person name="Gleeson J.G."/>
            <person name="Kim J."/>
        </authorList>
    </citation>
    <scope>INTERACTION WITH CEP83</scope>
    <scope>SUBCELLULAR LOCATION</scope>
</reference>
<reference key="14">
    <citation type="journal article" date="2015" name="Mol. Biol. Cell">
        <title>MDM1 is a microtubule-binding protein that negatively regulates centriole duplication.</title>
        <authorList>
            <person name="Van de Mark D."/>
            <person name="Kong D."/>
            <person name="Loncarek J."/>
            <person name="Stearns T."/>
        </authorList>
    </citation>
    <scope>SUBCELLULAR LOCATION</scope>
</reference>
<organism>
    <name type="scientific">Homo sapiens</name>
    <name type="common">Human</name>
    <dbReference type="NCBI Taxonomy" id="9606"/>
    <lineage>
        <taxon>Eukaryota</taxon>
        <taxon>Metazoa</taxon>
        <taxon>Chordata</taxon>
        <taxon>Craniata</taxon>
        <taxon>Vertebrata</taxon>
        <taxon>Euteleostomi</taxon>
        <taxon>Mammalia</taxon>
        <taxon>Eutheria</taxon>
        <taxon>Euarchontoglires</taxon>
        <taxon>Primates</taxon>
        <taxon>Haplorrhini</taxon>
        <taxon>Catarrhini</taxon>
        <taxon>Hominidae</taxon>
        <taxon>Homo</taxon>
    </lineage>
</organism>
<keyword id="KW-0002">3D-structure</keyword>
<keyword id="KW-0025">Alternative splicing</keyword>
<keyword id="KW-0131">Cell cycle</keyword>
<keyword id="KW-0132">Cell division</keyword>
<keyword id="KW-1186">Ciliopathy</keyword>
<keyword id="KW-0970">Cilium biogenesis/degradation</keyword>
<keyword id="KW-0175">Coiled coil</keyword>
<keyword id="KW-0963">Cytoplasm</keyword>
<keyword id="KW-0206">Cytoskeleton</keyword>
<keyword id="KW-0225">Disease variant</keyword>
<keyword id="KW-0227">DNA damage</keyword>
<keyword id="KW-0234">DNA repair</keyword>
<keyword id="KW-0498">Mitosis</keyword>
<keyword id="KW-0983">Nephronophthisis</keyword>
<keyword id="KW-0539">Nucleus</keyword>
<keyword id="KW-0597">Phosphoprotein</keyword>
<keyword id="KW-1267">Proteomics identification</keyword>
<keyword id="KW-1185">Reference proteome</keyword>
<protein>
    <recommendedName>
        <fullName>Centrosomal protein of 164 kDa</fullName>
        <shortName>Cep164</shortName>
    </recommendedName>
</protein>
<sequence length="1460" mass="164314">MAGRPLRIGDQLVLEEDYDETYIPSEQEILEFAREIGIDPIKEPELMWLAREGIVAPLPGEWKPCQDITGDIYYFNFANGQSMWDHPCDEHYRSLVIQERAKLSTSGAIKKKKKKKEKKDKKDRDPPKSSLALGSSLAPVHVPLGGLAPLRGLVDTPPSALRGSQSVSLGSSVESGRQLGELMLPSQGLKTSAYTKGLLGSIYEDKTALSLLGLGEETNEEDEEESDNQSVHSSSEPLRNLHLDIGALGGDFEYEESLRTSQPEEKKDVSLDSDAAGPPTPCKPSSPGADSSLSSAVGKGRQGSGARPGLPEKEENEKSEPKICRNLVTPKADPTGSEPAKASEKEAPEDTVDAGEEGSRREEAAKEPKKKASALEEGSSDASQELEISEHMKEPQLSDSIASDPKSFHGLDFGFRSRISEHLLDVDVLSPVLGGACRQAQQPLGIEDKDDSQSSQDELQSKQSKGLEERLSPPLPHEERAQSPPRSLATEEEPPQGPEGQPEWKEAEELGEDSAASLSLQLSLQREQAPSPPAACEKGKEQHSQAEELGPGQEEAEDPEEKVAVSPTPPVSPEVRSTEPVAPPEQLSEAALKAMEEAVAQVLEQDQRHLLESKQEKMQQLREKLCQEEEEEILRLHQQKEQSLSSLRERLQKAIEEEEARMREEESQRLSWLRAQVQSSTQADEDQIRAEQEASLQKLREELESQQKAERASLEQKNRQMLEQLKEEIEASEKSEQAALNAAKEKALQQLREQLEGERKEAVATLEKEHSAELERLCSSLEAKHREVVSSLQKKIQEAQQKEEAQLQKCLGQVEHRVHQKSYHVAGYEHELSSLLREKRQEVEGEHERRLDKMKEEHQQVMAKAREQYEAEERKQRAELLGHLTGELERLQRAHERELETVRQEQHKRLEDLRRRHREQERKLQDLELDLETRAKDVKARLALLEVQEETARREKQQLLDVQRQVALKSEEATATHQQLEEAQKEHTHLLQSNQQLREILDELQARKLKLESQVDLLQAQSQQLQKHFSSLEAEAQKKQHLLREVTVEENNASPHFEPDLHIEDLRKSLGTNQTKEVSSSLSQSKEDLYLDSLSSHNVWHLLSAEGVALRSAKEFLVQQTRSMRRRQTALKAAQQHWRHELASAQEVAKDPPGIKALEDMRKNLEKETRHLDEMKSAMRKGHNLLKKKEEKLNQLESSLWEEASDEGTLGGSPTKKAVTFDLSDMDSLSSESSESFSPPHREWWRQQRIDSTPSLTSRKIHGLSHSLRQISSQLSSVLSILDSLNPQSPPPLLASMPAQLPPRDPKSTPTPTYYGSLARFSALSSATPTSTQWAWDSGQGPRLPSSVAQTVDDFLLEKWRKYFPSGIPLLSNSPTPLESRLGYMSASEQLRLLQHSHSQVPEAGSTTFQGIIEANRRWLERVKNDPRLPLFSSTPKPKATLSLLQLGLDEHNRVKVYRF</sequence>